<accession>Q605R3</accession>
<protein>
    <recommendedName>
        <fullName evidence="1">Potassium-transporting ATPase KdpC subunit</fullName>
    </recommendedName>
    <alternativeName>
        <fullName evidence="1">ATP phosphohydrolase [potassium-transporting] C chain</fullName>
    </alternativeName>
    <alternativeName>
        <fullName evidence="1">Potassium-binding and translocating subunit C</fullName>
    </alternativeName>
    <alternativeName>
        <fullName evidence="1">Potassium-translocating ATPase C chain</fullName>
    </alternativeName>
</protein>
<sequence length="190" mass="20326">MINHFKPALLMLLVWTLITGVFYPVLVTHLGQLLFPRQANGSLIEKDGKVLGSELIGQPFGDPRYFWGRPSATAPHAYNAGASSGSNQGPTNPALLAAIKSRVQALRNADPGNTAPVPVDLVTASGSGLDPHISPAAAAYQAARVARLRNLSLPVVEDLVKRYTEGRQFGFLGEPRVNVLKLNLALDALR</sequence>
<name>KDPC_METCA</name>
<feature type="chain" id="PRO_1000022293" description="Potassium-transporting ATPase KdpC subunit">
    <location>
        <begin position="1"/>
        <end position="190"/>
    </location>
</feature>
<feature type="transmembrane region" description="Helical" evidence="1">
    <location>
        <begin position="7"/>
        <end position="27"/>
    </location>
</feature>
<reference key="1">
    <citation type="journal article" date="2004" name="PLoS Biol.">
        <title>Genomic insights into methanotrophy: the complete genome sequence of Methylococcus capsulatus (Bath).</title>
        <authorList>
            <person name="Ward N.L."/>
            <person name="Larsen O."/>
            <person name="Sakwa J."/>
            <person name="Bruseth L."/>
            <person name="Khouri H.M."/>
            <person name="Durkin A.S."/>
            <person name="Dimitrov G."/>
            <person name="Jiang L."/>
            <person name="Scanlan D."/>
            <person name="Kang K.H."/>
            <person name="Lewis M.R."/>
            <person name="Nelson K.E."/>
            <person name="Methe B.A."/>
            <person name="Wu M."/>
            <person name="Heidelberg J.F."/>
            <person name="Paulsen I.T."/>
            <person name="Fouts D.E."/>
            <person name="Ravel J."/>
            <person name="Tettelin H."/>
            <person name="Ren Q."/>
            <person name="Read T.D."/>
            <person name="DeBoy R.T."/>
            <person name="Seshadri R."/>
            <person name="Salzberg S.L."/>
            <person name="Jensen H.B."/>
            <person name="Birkeland N.K."/>
            <person name="Nelson W.C."/>
            <person name="Dodson R.J."/>
            <person name="Grindhaug S.H."/>
            <person name="Holt I.E."/>
            <person name="Eidhammer I."/>
            <person name="Jonasen I."/>
            <person name="Vanaken S."/>
            <person name="Utterback T.R."/>
            <person name="Feldblyum T.V."/>
            <person name="Fraser C.M."/>
            <person name="Lillehaug J.R."/>
            <person name="Eisen J.A."/>
        </authorList>
    </citation>
    <scope>NUCLEOTIDE SEQUENCE [LARGE SCALE GENOMIC DNA]</scope>
    <source>
        <strain>ATCC 33009 / NCIMB 11132 / Bath</strain>
    </source>
</reference>
<gene>
    <name evidence="1" type="primary">kdpC</name>
    <name type="ordered locus">MCA2215</name>
</gene>
<proteinExistence type="inferred from homology"/>
<organism>
    <name type="scientific">Methylococcus capsulatus (strain ATCC 33009 / NCIMB 11132 / Bath)</name>
    <dbReference type="NCBI Taxonomy" id="243233"/>
    <lineage>
        <taxon>Bacteria</taxon>
        <taxon>Pseudomonadati</taxon>
        <taxon>Pseudomonadota</taxon>
        <taxon>Gammaproteobacteria</taxon>
        <taxon>Methylococcales</taxon>
        <taxon>Methylococcaceae</taxon>
        <taxon>Methylococcus</taxon>
    </lineage>
</organism>
<evidence type="ECO:0000255" key="1">
    <source>
        <dbReference type="HAMAP-Rule" id="MF_00276"/>
    </source>
</evidence>
<comment type="function">
    <text evidence="1">Part of the high-affinity ATP-driven potassium transport (or Kdp) system, which catalyzes the hydrolysis of ATP coupled with the electrogenic transport of potassium into the cytoplasm. This subunit acts as a catalytic chaperone that increases the ATP-binding affinity of the ATP-hydrolyzing subunit KdpB by the formation of a transient KdpB/KdpC/ATP ternary complex.</text>
</comment>
<comment type="subunit">
    <text evidence="1">The system is composed of three essential subunits: KdpA, KdpB and KdpC.</text>
</comment>
<comment type="subcellular location">
    <subcellularLocation>
        <location evidence="1">Cell inner membrane</location>
        <topology evidence="1">Single-pass membrane protein</topology>
    </subcellularLocation>
</comment>
<comment type="similarity">
    <text evidence="1">Belongs to the KdpC family.</text>
</comment>
<dbReference type="EMBL" id="AE017282">
    <property type="protein sequence ID" value="AAU91834.1"/>
    <property type="molecule type" value="Genomic_DNA"/>
</dbReference>
<dbReference type="RefSeq" id="WP_010961447.1">
    <property type="nucleotide sequence ID" value="NC_002977.6"/>
</dbReference>
<dbReference type="SMR" id="Q605R3"/>
<dbReference type="STRING" id="243233.MCA2215"/>
<dbReference type="GeneID" id="88224427"/>
<dbReference type="KEGG" id="mca:MCA2215"/>
<dbReference type="eggNOG" id="COG2156">
    <property type="taxonomic scope" value="Bacteria"/>
</dbReference>
<dbReference type="HOGENOM" id="CLU_077094_2_0_6"/>
<dbReference type="Proteomes" id="UP000006821">
    <property type="component" value="Chromosome"/>
</dbReference>
<dbReference type="GO" id="GO:0005886">
    <property type="term" value="C:plasma membrane"/>
    <property type="evidence" value="ECO:0007669"/>
    <property type="project" value="UniProtKB-SubCell"/>
</dbReference>
<dbReference type="GO" id="GO:0005524">
    <property type="term" value="F:ATP binding"/>
    <property type="evidence" value="ECO:0007669"/>
    <property type="project" value="UniProtKB-UniRule"/>
</dbReference>
<dbReference type="GO" id="GO:0008556">
    <property type="term" value="F:P-type potassium transmembrane transporter activity"/>
    <property type="evidence" value="ECO:0007669"/>
    <property type="project" value="InterPro"/>
</dbReference>
<dbReference type="HAMAP" id="MF_00276">
    <property type="entry name" value="KdpC"/>
    <property type="match status" value="1"/>
</dbReference>
<dbReference type="InterPro" id="IPR003820">
    <property type="entry name" value="KdpC"/>
</dbReference>
<dbReference type="NCBIfam" id="TIGR00681">
    <property type="entry name" value="kdpC"/>
    <property type="match status" value="1"/>
</dbReference>
<dbReference type="NCBIfam" id="NF001454">
    <property type="entry name" value="PRK00315.1"/>
    <property type="match status" value="1"/>
</dbReference>
<dbReference type="PANTHER" id="PTHR30042">
    <property type="entry name" value="POTASSIUM-TRANSPORTING ATPASE C CHAIN"/>
    <property type="match status" value="1"/>
</dbReference>
<dbReference type="PANTHER" id="PTHR30042:SF2">
    <property type="entry name" value="POTASSIUM-TRANSPORTING ATPASE KDPC SUBUNIT"/>
    <property type="match status" value="1"/>
</dbReference>
<dbReference type="Pfam" id="PF02669">
    <property type="entry name" value="KdpC"/>
    <property type="match status" value="1"/>
</dbReference>
<dbReference type="PIRSF" id="PIRSF001296">
    <property type="entry name" value="K_ATPase_KdpC"/>
    <property type="match status" value="1"/>
</dbReference>
<keyword id="KW-0067">ATP-binding</keyword>
<keyword id="KW-0997">Cell inner membrane</keyword>
<keyword id="KW-1003">Cell membrane</keyword>
<keyword id="KW-0406">Ion transport</keyword>
<keyword id="KW-0472">Membrane</keyword>
<keyword id="KW-0547">Nucleotide-binding</keyword>
<keyword id="KW-0630">Potassium</keyword>
<keyword id="KW-0633">Potassium transport</keyword>
<keyword id="KW-1185">Reference proteome</keyword>
<keyword id="KW-0812">Transmembrane</keyword>
<keyword id="KW-1133">Transmembrane helix</keyword>
<keyword id="KW-0813">Transport</keyword>